<protein>
    <recommendedName>
        <fullName evidence="1">Isoprenyl transferase</fullName>
        <ecNumber evidence="1">2.5.1.-</ecNumber>
    </recommendedName>
</protein>
<gene>
    <name evidence="1" type="primary">uppS</name>
    <name type="ordered locus">RT0411</name>
</gene>
<name>ISPT_RICTY</name>
<proteinExistence type="inferred from homology"/>
<reference key="1">
    <citation type="journal article" date="2004" name="J. Bacteriol.">
        <title>Complete genome sequence of Rickettsia typhi and comparison with sequences of other Rickettsiae.</title>
        <authorList>
            <person name="McLeod M.P."/>
            <person name="Qin X."/>
            <person name="Karpathy S.E."/>
            <person name="Gioia J."/>
            <person name="Highlander S.K."/>
            <person name="Fox G.E."/>
            <person name="McNeill T.Z."/>
            <person name="Jiang H."/>
            <person name="Muzny D."/>
            <person name="Jacob L.S."/>
            <person name="Hawes A.C."/>
            <person name="Sodergren E."/>
            <person name="Gill R."/>
            <person name="Hume J."/>
            <person name="Morgan M."/>
            <person name="Fan G."/>
            <person name="Amin A.G."/>
            <person name="Gibbs R.A."/>
            <person name="Hong C."/>
            <person name="Yu X.-J."/>
            <person name="Walker D.H."/>
            <person name="Weinstock G.M."/>
        </authorList>
    </citation>
    <scope>NUCLEOTIDE SEQUENCE [LARGE SCALE GENOMIC DNA]</scope>
    <source>
        <strain>ATCC VR-144 / Wilmington</strain>
    </source>
</reference>
<sequence>MTTIKHLAIIMDGNARWADQHNLTKSEGHKAGADKIRELLPEFINLNIPYITLYTFSSENWQRSSSEVNFLIKLLSLYLKNELDSLHENGVKIKVIGRLNLLRSSLQKQINNAIELTQNNNKIKLCIAFSYGSRQEIVDACTKIIANGKKQVSENDIQHALYDPEMPDVDLLIRSGGVYRISNFLLWQAAYAELYFSQKYWPDFNKDDIHEAINDYSKRKRTFGKR</sequence>
<evidence type="ECO:0000255" key="1">
    <source>
        <dbReference type="HAMAP-Rule" id="MF_01139"/>
    </source>
</evidence>
<organism>
    <name type="scientific">Rickettsia typhi (strain ATCC VR-144 / Wilmington)</name>
    <dbReference type="NCBI Taxonomy" id="257363"/>
    <lineage>
        <taxon>Bacteria</taxon>
        <taxon>Pseudomonadati</taxon>
        <taxon>Pseudomonadota</taxon>
        <taxon>Alphaproteobacteria</taxon>
        <taxon>Rickettsiales</taxon>
        <taxon>Rickettsiaceae</taxon>
        <taxon>Rickettsieae</taxon>
        <taxon>Rickettsia</taxon>
        <taxon>typhus group</taxon>
    </lineage>
</organism>
<accession>Q68WV4</accession>
<comment type="function">
    <text evidence="1">Catalyzes the condensation of isopentenyl diphosphate (IPP) with allylic pyrophosphates generating different type of terpenoids.</text>
</comment>
<comment type="cofactor">
    <cofactor evidence="1">
        <name>Mg(2+)</name>
        <dbReference type="ChEBI" id="CHEBI:18420"/>
    </cofactor>
    <text evidence="1">Binds 2 magnesium ions per subunit.</text>
</comment>
<comment type="subunit">
    <text evidence="1">Homodimer.</text>
</comment>
<comment type="similarity">
    <text evidence="1">Belongs to the UPP synthase family.</text>
</comment>
<feature type="chain" id="PRO_0000123665" description="Isoprenyl transferase">
    <location>
        <begin position="1"/>
        <end position="226"/>
    </location>
</feature>
<feature type="active site" evidence="1">
    <location>
        <position position="12"/>
    </location>
</feature>
<feature type="active site" description="Proton acceptor" evidence="1">
    <location>
        <position position="60"/>
    </location>
</feature>
<feature type="binding site" evidence="1">
    <location>
        <position position="12"/>
    </location>
    <ligand>
        <name>Mg(2+)</name>
        <dbReference type="ChEBI" id="CHEBI:18420"/>
    </ligand>
</feature>
<feature type="binding site" evidence="1">
    <location>
        <begin position="13"/>
        <end position="16"/>
    </location>
    <ligand>
        <name>substrate</name>
    </ligand>
</feature>
<feature type="binding site" evidence="1">
    <location>
        <position position="17"/>
    </location>
    <ligand>
        <name>substrate</name>
    </ligand>
</feature>
<feature type="binding site" evidence="1">
    <location>
        <position position="25"/>
    </location>
    <ligand>
        <name>substrate</name>
    </ligand>
</feature>
<feature type="binding site" evidence="1">
    <location>
        <position position="29"/>
    </location>
    <ligand>
        <name>substrate</name>
    </ligand>
</feature>
<feature type="binding site" evidence="1">
    <location>
        <begin position="57"/>
        <end position="59"/>
    </location>
    <ligand>
        <name>substrate</name>
    </ligand>
</feature>
<feature type="binding site" evidence="1">
    <location>
        <position position="61"/>
    </location>
    <ligand>
        <name>substrate</name>
    </ligand>
</feature>
<feature type="binding site" evidence="1">
    <location>
        <position position="63"/>
    </location>
    <ligand>
        <name>substrate</name>
    </ligand>
</feature>
<feature type="binding site" evidence="1">
    <location>
        <position position="174"/>
    </location>
    <ligand>
        <name>substrate</name>
    </ligand>
</feature>
<feature type="binding site" evidence="1">
    <location>
        <begin position="180"/>
        <end position="182"/>
    </location>
    <ligand>
        <name>substrate</name>
    </ligand>
</feature>
<feature type="binding site" evidence="1">
    <location>
        <position position="193"/>
    </location>
    <ligand>
        <name>Mg(2+)</name>
        <dbReference type="ChEBI" id="CHEBI:18420"/>
    </ligand>
</feature>
<keyword id="KW-0460">Magnesium</keyword>
<keyword id="KW-0479">Metal-binding</keyword>
<keyword id="KW-0808">Transferase</keyword>
<dbReference type="EC" id="2.5.1.-" evidence="1"/>
<dbReference type="EMBL" id="AE017197">
    <property type="protein sequence ID" value="AAU03888.1"/>
    <property type="molecule type" value="Genomic_DNA"/>
</dbReference>
<dbReference type="RefSeq" id="WP_011190872.1">
    <property type="nucleotide sequence ID" value="NC_006142.1"/>
</dbReference>
<dbReference type="SMR" id="Q68WV4"/>
<dbReference type="KEGG" id="rty:RT0411"/>
<dbReference type="eggNOG" id="COG0020">
    <property type="taxonomic scope" value="Bacteria"/>
</dbReference>
<dbReference type="HOGENOM" id="CLU_038505_1_1_5"/>
<dbReference type="OrthoDB" id="4191603at2"/>
<dbReference type="Proteomes" id="UP000000604">
    <property type="component" value="Chromosome"/>
</dbReference>
<dbReference type="GO" id="GO:0045547">
    <property type="term" value="F:ditrans,polycis-polyprenyl diphosphate synthase [(2E,6E)-farnesyl diphosphate specific] activity"/>
    <property type="evidence" value="ECO:0007669"/>
    <property type="project" value="TreeGrafter"/>
</dbReference>
<dbReference type="GO" id="GO:0000287">
    <property type="term" value="F:magnesium ion binding"/>
    <property type="evidence" value="ECO:0007669"/>
    <property type="project" value="UniProtKB-UniRule"/>
</dbReference>
<dbReference type="GO" id="GO:0016094">
    <property type="term" value="P:polyprenol biosynthetic process"/>
    <property type="evidence" value="ECO:0007669"/>
    <property type="project" value="TreeGrafter"/>
</dbReference>
<dbReference type="CDD" id="cd00475">
    <property type="entry name" value="Cis_IPPS"/>
    <property type="match status" value="1"/>
</dbReference>
<dbReference type="Gene3D" id="3.40.1180.10">
    <property type="entry name" value="Decaprenyl diphosphate synthase-like"/>
    <property type="match status" value="1"/>
</dbReference>
<dbReference type="HAMAP" id="MF_01139">
    <property type="entry name" value="ISPT"/>
    <property type="match status" value="1"/>
</dbReference>
<dbReference type="InterPro" id="IPR001441">
    <property type="entry name" value="UPP_synth-like"/>
</dbReference>
<dbReference type="InterPro" id="IPR018520">
    <property type="entry name" value="UPP_synth-like_CS"/>
</dbReference>
<dbReference type="InterPro" id="IPR036424">
    <property type="entry name" value="UPP_synth-like_sf"/>
</dbReference>
<dbReference type="NCBIfam" id="TIGR00055">
    <property type="entry name" value="uppS"/>
    <property type="match status" value="1"/>
</dbReference>
<dbReference type="PANTHER" id="PTHR10291:SF0">
    <property type="entry name" value="DEHYDRODOLICHYL DIPHOSPHATE SYNTHASE 2"/>
    <property type="match status" value="1"/>
</dbReference>
<dbReference type="PANTHER" id="PTHR10291">
    <property type="entry name" value="DEHYDRODOLICHYL DIPHOSPHATE SYNTHASE FAMILY MEMBER"/>
    <property type="match status" value="1"/>
</dbReference>
<dbReference type="Pfam" id="PF01255">
    <property type="entry name" value="Prenyltransf"/>
    <property type="match status" value="1"/>
</dbReference>
<dbReference type="SUPFAM" id="SSF64005">
    <property type="entry name" value="Undecaprenyl diphosphate synthase"/>
    <property type="match status" value="1"/>
</dbReference>
<dbReference type="PROSITE" id="PS01066">
    <property type="entry name" value="UPP_SYNTHASE"/>
    <property type="match status" value="1"/>
</dbReference>